<comment type="function">
    <text evidence="1">Involved in regulation of DNA replication.</text>
</comment>
<comment type="similarity">
    <text evidence="1">Belongs to the CDC6/cdc18 family.</text>
</comment>
<keyword id="KW-0067">ATP-binding</keyword>
<keyword id="KW-0235">DNA replication</keyword>
<keyword id="KW-0547">Nucleotide-binding</keyword>
<keyword id="KW-1185">Reference proteome</keyword>
<gene>
    <name type="primary">cdc6</name>
    <name type="ordered locus">Mlab_0001</name>
</gene>
<organism>
    <name type="scientific">Methanocorpusculum labreanum (strain ATCC 43576 / DSM 4855 / Z)</name>
    <dbReference type="NCBI Taxonomy" id="410358"/>
    <lineage>
        <taxon>Archaea</taxon>
        <taxon>Methanobacteriati</taxon>
        <taxon>Methanobacteriota</taxon>
        <taxon>Stenosarchaea group</taxon>
        <taxon>Methanomicrobia</taxon>
        <taxon>Methanomicrobiales</taxon>
        <taxon>Methanocorpusculaceae</taxon>
        <taxon>Methanocorpusculum</taxon>
    </lineage>
</organism>
<accession>A2SPC3</accession>
<proteinExistence type="inferred from homology"/>
<dbReference type="EMBL" id="CP000559">
    <property type="protein sequence ID" value="ABN06179.1"/>
    <property type="molecule type" value="Genomic_DNA"/>
</dbReference>
<dbReference type="RefSeq" id="WP_011832380.1">
    <property type="nucleotide sequence ID" value="NC_008942.1"/>
</dbReference>
<dbReference type="SMR" id="A2SPC3"/>
<dbReference type="STRING" id="410358.Mlab_0001"/>
<dbReference type="GeneID" id="4795583"/>
<dbReference type="KEGG" id="mla:Mlab_0001"/>
<dbReference type="eggNOG" id="arCOG00467">
    <property type="taxonomic scope" value="Archaea"/>
</dbReference>
<dbReference type="HOGENOM" id="CLU_025112_3_1_2"/>
<dbReference type="OrthoDB" id="195574at2157"/>
<dbReference type="Proteomes" id="UP000000365">
    <property type="component" value="Chromosome"/>
</dbReference>
<dbReference type="GO" id="GO:0005524">
    <property type="term" value="F:ATP binding"/>
    <property type="evidence" value="ECO:0007669"/>
    <property type="project" value="UniProtKB-UniRule"/>
</dbReference>
<dbReference type="GO" id="GO:0016887">
    <property type="term" value="F:ATP hydrolysis activity"/>
    <property type="evidence" value="ECO:0007669"/>
    <property type="project" value="InterPro"/>
</dbReference>
<dbReference type="GO" id="GO:0006260">
    <property type="term" value="P:DNA replication"/>
    <property type="evidence" value="ECO:0007669"/>
    <property type="project" value="UniProtKB-UniRule"/>
</dbReference>
<dbReference type="CDD" id="cd00009">
    <property type="entry name" value="AAA"/>
    <property type="match status" value="1"/>
</dbReference>
<dbReference type="CDD" id="cd08768">
    <property type="entry name" value="Cdc6_C"/>
    <property type="match status" value="1"/>
</dbReference>
<dbReference type="FunFam" id="1.10.8.60:FF:000073">
    <property type="entry name" value="ORC1-type DNA replication protein"/>
    <property type="match status" value="1"/>
</dbReference>
<dbReference type="FunFam" id="3.40.50.300:FF:000930">
    <property type="entry name" value="ORC1-type DNA replication protein"/>
    <property type="match status" value="1"/>
</dbReference>
<dbReference type="Gene3D" id="1.10.8.60">
    <property type="match status" value="1"/>
</dbReference>
<dbReference type="Gene3D" id="3.40.50.300">
    <property type="entry name" value="P-loop containing nucleotide triphosphate hydrolases"/>
    <property type="match status" value="1"/>
</dbReference>
<dbReference type="Gene3D" id="1.10.10.10">
    <property type="entry name" value="Winged helix-like DNA-binding domain superfamily/Winged helix DNA-binding domain"/>
    <property type="match status" value="1"/>
</dbReference>
<dbReference type="HAMAP" id="MF_01407">
    <property type="entry name" value="ORC1_type_DNA_replic_protein"/>
    <property type="match status" value="1"/>
</dbReference>
<dbReference type="InterPro" id="IPR003593">
    <property type="entry name" value="AAA+_ATPase"/>
</dbReference>
<dbReference type="InterPro" id="IPR003959">
    <property type="entry name" value="ATPase_AAA_core"/>
</dbReference>
<dbReference type="InterPro" id="IPR015163">
    <property type="entry name" value="Cdc6_C"/>
</dbReference>
<dbReference type="InterPro" id="IPR055237">
    <property type="entry name" value="Cdc6_lid"/>
</dbReference>
<dbReference type="InterPro" id="IPR050311">
    <property type="entry name" value="ORC1/CDC6"/>
</dbReference>
<dbReference type="InterPro" id="IPR014277">
    <property type="entry name" value="Orc1/Cdc6_arc"/>
</dbReference>
<dbReference type="InterPro" id="IPR027417">
    <property type="entry name" value="P-loop_NTPase"/>
</dbReference>
<dbReference type="InterPro" id="IPR036388">
    <property type="entry name" value="WH-like_DNA-bd_sf"/>
</dbReference>
<dbReference type="InterPro" id="IPR036390">
    <property type="entry name" value="WH_DNA-bd_sf"/>
</dbReference>
<dbReference type="NCBIfam" id="TIGR02928">
    <property type="entry name" value="orc1/cdc6 family replication initiation protein"/>
    <property type="match status" value="1"/>
</dbReference>
<dbReference type="NCBIfam" id="NF001625">
    <property type="entry name" value="PRK00411.1-3"/>
    <property type="match status" value="1"/>
</dbReference>
<dbReference type="PANTHER" id="PTHR10763">
    <property type="entry name" value="CELL DIVISION CONTROL PROTEIN 6-RELATED"/>
    <property type="match status" value="1"/>
</dbReference>
<dbReference type="PANTHER" id="PTHR10763:SF22">
    <property type="entry name" value="ORC1-TYPE DNA REPLICATION PROTEIN"/>
    <property type="match status" value="1"/>
</dbReference>
<dbReference type="Pfam" id="PF00004">
    <property type="entry name" value="AAA"/>
    <property type="match status" value="1"/>
</dbReference>
<dbReference type="Pfam" id="PF09079">
    <property type="entry name" value="Cdc6_C"/>
    <property type="match status" value="1"/>
</dbReference>
<dbReference type="Pfam" id="PF22703">
    <property type="entry name" value="Cdc6_lid"/>
    <property type="match status" value="1"/>
</dbReference>
<dbReference type="SMART" id="SM00382">
    <property type="entry name" value="AAA"/>
    <property type="match status" value="1"/>
</dbReference>
<dbReference type="SMART" id="SM01074">
    <property type="entry name" value="Cdc6_C"/>
    <property type="match status" value="1"/>
</dbReference>
<dbReference type="SUPFAM" id="SSF52540">
    <property type="entry name" value="P-loop containing nucleoside triphosphate hydrolases"/>
    <property type="match status" value="1"/>
</dbReference>
<dbReference type="SUPFAM" id="SSF46785">
    <property type="entry name" value="Winged helix' DNA-binding domain"/>
    <property type="match status" value="1"/>
</dbReference>
<reference key="1">
    <citation type="journal article" date="2009" name="Stand. Genomic Sci.">
        <title>Complete genome sequence of Methanocorpusculum labreanum type strain Z.</title>
        <authorList>
            <person name="Anderson I.J."/>
            <person name="Sieprawska-Lupa M."/>
            <person name="Goltsman E."/>
            <person name="Lapidus A."/>
            <person name="Copeland A."/>
            <person name="Glavina Del Rio T."/>
            <person name="Tice H."/>
            <person name="Dalin E."/>
            <person name="Barry K."/>
            <person name="Pitluck S."/>
            <person name="Hauser L."/>
            <person name="Land M."/>
            <person name="Lucas S."/>
            <person name="Richardson P."/>
            <person name="Whitman W.B."/>
            <person name="Kyrpides N.C."/>
        </authorList>
    </citation>
    <scope>NUCLEOTIDE SEQUENCE [LARGE SCALE GENOMIC DNA]</scope>
    <source>
        <strain>ATCC 43576 / DSM 4855 / Z</strain>
    </source>
</reference>
<sequence length="425" mass="47379">MDSEPYKSTGLFKKYINPNKIFQNREVLRHSYSPKELPHRMDQIDSIAEILAPALQGATPSNILIYGKTGTGKTATVKFVGTELENESSEFSPCRLVHLNCETIDTQYRVLAQIANHVSGHDLKASDKIKNTIPATGWHTDQVYSELKNVLEQAGGLQIIVLDEIDKLVKKSGDDTLYNLTRINSDLFSSRVCIIGISNDLTFKDFLDPRVLSSLSEEELVFPPYNADQLRDILHQRAEMAFFPDVVSDEVIGLCAARAAQEHGDARRALDLLRVSGELAEREGAEHVMVKHVNSAQENIETDTMSECVKTLPSQSKIVLCSMLLMAASGQKVFTSGSVINVYREVAAELDTEALSHRRVSDLINELNMLGIITTRVVSHGRHGRTTEIYFKSPTNDIRTVIMNDSRFQECGILHPLLKSHEKGD</sequence>
<name>CDC6_METLZ</name>
<feature type="chain" id="PRO_0000307414" description="ORC1-type DNA replication protein">
    <location>
        <begin position="1"/>
        <end position="425"/>
    </location>
</feature>
<feature type="binding site" evidence="1">
    <location>
        <begin position="71"/>
        <end position="75"/>
    </location>
    <ligand>
        <name>ATP</name>
        <dbReference type="ChEBI" id="CHEBI:30616"/>
    </ligand>
</feature>
<feature type="binding site" evidence="1">
    <location>
        <position position="225"/>
    </location>
    <ligand>
        <name>ATP</name>
        <dbReference type="ChEBI" id="CHEBI:30616"/>
    </ligand>
</feature>
<feature type="binding site" evidence="1">
    <location>
        <position position="237"/>
    </location>
    <ligand>
        <name>ATP</name>
        <dbReference type="ChEBI" id="CHEBI:30616"/>
    </ligand>
</feature>
<evidence type="ECO:0000255" key="1">
    <source>
        <dbReference type="HAMAP-Rule" id="MF_01407"/>
    </source>
</evidence>
<protein>
    <recommendedName>
        <fullName evidence="1">ORC1-type DNA replication protein</fullName>
    </recommendedName>
</protein>